<name>SYR_BUCCC</name>
<evidence type="ECO:0000255" key="1">
    <source>
        <dbReference type="HAMAP-Rule" id="MF_00123"/>
    </source>
</evidence>
<sequence>MNIQKFLKKKIKKICIKLGLPENFNPIIQKNIKKKNIDYQINGIIKLKKKKSNYHYKLAKKISYYMNKSKIYKKISISKPGFINITLDSNWICTNINNMFIAKNFNISFKKPKKIIIDYSSPNIAKEMHVGHLRSTILGDTTARILKFLGHNVIKQNHIGDWGIQFGMLITQLKLESKISFKNIEKIYKKSYLNYKKNPIFFKKTKKNVVKLQKKDKKCIYIWKKIVKKSIKKNNKVYKKLNVSLKKKDIRGESFYNFMLPGIISDLKKKKIAVNYQGCVIVYLKNFKNRLGKKMGVVIQKKDGAFLYTTTDIACLKYRCKTLKADRIIYYIDNRQKQHLLQIWNIAKKAKYFTKKILLEHHSFGMILHKNKKPFKTRNGDTIKLIKLLNKGVTKAKEKIKKKNRKIKKKELKKIAHNIGIGAIKYFDLSKKRKLDYIFDWDKMLSLEGNTAPYIQYAYIRIKSIIKKNTTIFQNDKYKINIFTSFERQLIFSIFQFEEIIHILEKKGTPHLMCNYLYDLSGKFSKFYENCSILNAKEKHIKISRIKLSILTSKIIKKCLYFLGIKTVSKM</sequence>
<protein>
    <recommendedName>
        <fullName evidence="1">Arginine--tRNA ligase</fullName>
        <ecNumber evidence="1">6.1.1.19</ecNumber>
    </recommendedName>
    <alternativeName>
        <fullName evidence="1">Arginyl-tRNA synthetase</fullName>
        <shortName evidence="1">ArgRS</shortName>
    </alternativeName>
</protein>
<proteinExistence type="inferred from homology"/>
<feature type="chain" id="PRO_1000017996" description="Arginine--tRNA ligase">
    <location>
        <begin position="1"/>
        <end position="571"/>
    </location>
</feature>
<feature type="short sequence motif" description="'HIGH' region">
    <location>
        <begin position="122"/>
        <end position="132"/>
    </location>
</feature>
<accession>Q057S1</accession>
<keyword id="KW-0030">Aminoacyl-tRNA synthetase</keyword>
<keyword id="KW-0067">ATP-binding</keyword>
<keyword id="KW-0963">Cytoplasm</keyword>
<keyword id="KW-0436">Ligase</keyword>
<keyword id="KW-0547">Nucleotide-binding</keyword>
<keyword id="KW-0648">Protein biosynthesis</keyword>
<keyword id="KW-1185">Reference proteome</keyword>
<comment type="catalytic activity">
    <reaction evidence="1">
        <text>tRNA(Arg) + L-arginine + ATP = L-arginyl-tRNA(Arg) + AMP + diphosphate</text>
        <dbReference type="Rhea" id="RHEA:20301"/>
        <dbReference type="Rhea" id="RHEA-COMP:9658"/>
        <dbReference type="Rhea" id="RHEA-COMP:9673"/>
        <dbReference type="ChEBI" id="CHEBI:30616"/>
        <dbReference type="ChEBI" id="CHEBI:32682"/>
        <dbReference type="ChEBI" id="CHEBI:33019"/>
        <dbReference type="ChEBI" id="CHEBI:78442"/>
        <dbReference type="ChEBI" id="CHEBI:78513"/>
        <dbReference type="ChEBI" id="CHEBI:456215"/>
        <dbReference type="EC" id="6.1.1.19"/>
    </reaction>
</comment>
<comment type="subunit">
    <text evidence="1">Monomer.</text>
</comment>
<comment type="subcellular location">
    <subcellularLocation>
        <location evidence="1">Cytoplasm</location>
    </subcellularLocation>
</comment>
<comment type="similarity">
    <text evidence="1">Belongs to the class-I aminoacyl-tRNA synthetase family.</text>
</comment>
<organism>
    <name type="scientific">Buchnera aphidicola subsp. Cinara cedri (strain Cc)</name>
    <dbReference type="NCBI Taxonomy" id="372461"/>
    <lineage>
        <taxon>Bacteria</taxon>
        <taxon>Pseudomonadati</taxon>
        <taxon>Pseudomonadota</taxon>
        <taxon>Gammaproteobacteria</taxon>
        <taxon>Enterobacterales</taxon>
        <taxon>Erwiniaceae</taxon>
        <taxon>Buchnera</taxon>
    </lineage>
</organism>
<reference key="1">
    <citation type="journal article" date="2006" name="Science">
        <title>A small microbial genome: the end of a long symbiotic relationship?</title>
        <authorList>
            <person name="Perez-Brocal V."/>
            <person name="Gil R."/>
            <person name="Ramos S."/>
            <person name="Lamelas A."/>
            <person name="Postigo M."/>
            <person name="Michelena J.M."/>
            <person name="Silva F.J."/>
            <person name="Moya A."/>
            <person name="Latorre A."/>
        </authorList>
    </citation>
    <scope>NUCLEOTIDE SEQUENCE [LARGE SCALE GENOMIC DNA]</scope>
    <source>
        <strain>Cc</strain>
    </source>
</reference>
<gene>
    <name evidence="1" type="primary">argS</name>
    <name type="ordered locus">BCc_152</name>
</gene>
<dbReference type="EC" id="6.1.1.19" evidence="1"/>
<dbReference type="EMBL" id="CP000263">
    <property type="protein sequence ID" value="ABJ90628.1"/>
    <property type="molecule type" value="Genomic_DNA"/>
</dbReference>
<dbReference type="RefSeq" id="WP_011672547.1">
    <property type="nucleotide sequence ID" value="NC_008513.1"/>
</dbReference>
<dbReference type="SMR" id="Q057S1"/>
<dbReference type="STRING" id="372461.BCc_152"/>
<dbReference type="KEGG" id="bcc:BCc_152"/>
<dbReference type="eggNOG" id="COG0018">
    <property type="taxonomic scope" value="Bacteria"/>
</dbReference>
<dbReference type="HOGENOM" id="CLU_006406_5_1_6"/>
<dbReference type="OrthoDB" id="9803211at2"/>
<dbReference type="Proteomes" id="UP000000669">
    <property type="component" value="Chromosome"/>
</dbReference>
<dbReference type="GO" id="GO:0005737">
    <property type="term" value="C:cytoplasm"/>
    <property type="evidence" value="ECO:0007669"/>
    <property type="project" value="UniProtKB-SubCell"/>
</dbReference>
<dbReference type="GO" id="GO:0004814">
    <property type="term" value="F:arginine-tRNA ligase activity"/>
    <property type="evidence" value="ECO:0007669"/>
    <property type="project" value="UniProtKB-UniRule"/>
</dbReference>
<dbReference type="GO" id="GO:0005524">
    <property type="term" value="F:ATP binding"/>
    <property type="evidence" value="ECO:0007669"/>
    <property type="project" value="UniProtKB-UniRule"/>
</dbReference>
<dbReference type="GO" id="GO:0006420">
    <property type="term" value="P:arginyl-tRNA aminoacylation"/>
    <property type="evidence" value="ECO:0007669"/>
    <property type="project" value="UniProtKB-UniRule"/>
</dbReference>
<dbReference type="CDD" id="cd00671">
    <property type="entry name" value="ArgRS_core"/>
    <property type="match status" value="1"/>
</dbReference>
<dbReference type="FunFam" id="3.40.50.620:FF:000116">
    <property type="entry name" value="Arginine--tRNA ligase"/>
    <property type="match status" value="1"/>
</dbReference>
<dbReference type="Gene3D" id="3.30.1360.70">
    <property type="entry name" value="Arginyl tRNA synthetase N-terminal domain"/>
    <property type="match status" value="1"/>
</dbReference>
<dbReference type="Gene3D" id="3.40.50.620">
    <property type="entry name" value="HUPs"/>
    <property type="match status" value="1"/>
</dbReference>
<dbReference type="Gene3D" id="1.10.730.10">
    <property type="entry name" value="Isoleucyl-tRNA Synthetase, Domain 1"/>
    <property type="match status" value="1"/>
</dbReference>
<dbReference type="HAMAP" id="MF_00123">
    <property type="entry name" value="Arg_tRNA_synth"/>
    <property type="match status" value="1"/>
</dbReference>
<dbReference type="InterPro" id="IPR001412">
    <property type="entry name" value="aa-tRNA-synth_I_CS"/>
</dbReference>
<dbReference type="InterPro" id="IPR001278">
    <property type="entry name" value="Arg-tRNA-ligase"/>
</dbReference>
<dbReference type="InterPro" id="IPR005148">
    <property type="entry name" value="Arg-tRNA-synth_N"/>
</dbReference>
<dbReference type="InterPro" id="IPR036695">
    <property type="entry name" value="Arg-tRNA-synth_N_sf"/>
</dbReference>
<dbReference type="InterPro" id="IPR035684">
    <property type="entry name" value="ArgRS_core"/>
</dbReference>
<dbReference type="InterPro" id="IPR008909">
    <property type="entry name" value="DALR_anticod-bd"/>
</dbReference>
<dbReference type="InterPro" id="IPR014729">
    <property type="entry name" value="Rossmann-like_a/b/a_fold"/>
</dbReference>
<dbReference type="InterPro" id="IPR009080">
    <property type="entry name" value="tRNAsynth_Ia_anticodon-bd"/>
</dbReference>
<dbReference type="NCBIfam" id="TIGR00456">
    <property type="entry name" value="argS"/>
    <property type="match status" value="1"/>
</dbReference>
<dbReference type="PANTHER" id="PTHR11956:SF5">
    <property type="entry name" value="ARGININE--TRNA LIGASE, CYTOPLASMIC"/>
    <property type="match status" value="1"/>
</dbReference>
<dbReference type="PANTHER" id="PTHR11956">
    <property type="entry name" value="ARGINYL-TRNA SYNTHETASE"/>
    <property type="match status" value="1"/>
</dbReference>
<dbReference type="Pfam" id="PF03485">
    <property type="entry name" value="Arg_tRNA_synt_N"/>
    <property type="match status" value="1"/>
</dbReference>
<dbReference type="Pfam" id="PF05746">
    <property type="entry name" value="DALR_1"/>
    <property type="match status" value="1"/>
</dbReference>
<dbReference type="Pfam" id="PF00750">
    <property type="entry name" value="tRNA-synt_1d"/>
    <property type="match status" value="1"/>
</dbReference>
<dbReference type="PRINTS" id="PR01038">
    <property type="entry name" value="TRNASYNTHARG"/>
</dbReference>
<dbReference type="SMART" id="SM01016">
    <property type="entry name" value="Arg_tRNA_synt_N"/>
    <property type="match status" value="1"/>
</dbReference>
<dbReference type="SMART" id="SM00836">
    <property type="entry name" value="DALR_1"/>
    <property type="match status" value="1"/>
</dbReference>
<dbReference type="SUPFAM" id="SSF47323">
    <property type="entry name" value="Anticodon-binding domain of a subclass of class I aminoacyl-tRNA synthetases"/>
    <property type="match status" value="1"/>
</dbReference>
<dbReference type="SUPFAM" id="SSF55190">
    <property type="entry name" value="Arginyl-tRNA synthetase (ArgRS), N-terminal 'additional' domain"/>
    <property type="match status" value="1"/>
</dbReference>
<dbReference type="SUPFAM" id="SSF52374">
    <property type="entry name" value="Nucleotidylyl transferase"/>
    <property type="match status" value="1"/>
</dbReference>
<dbReference type="PROSITE" id="PS00178">
    <property type="entry name" value="AA_TRNA_LIGASE_I"/>
    <property type="match status" value="1"/>
</dbReference>